<gene>
    <name evidence="1" type="primary">gpmA</name>
    <name type="ordered locus">SGO_0704</name>
</gene>
<name>GPMA_STRGC</name>
<accession>A8AW46</accession>
<evidence type="ECO:0000255" key="1">
    <source>
        <dbReference type="HAMAP-Rule" id="MF_01039"/>
    </source>
</evidence>
<reference key="1">
    <citation type="journal article" date="2007" name="J. Bacteriol.">
        <title>Genome-wide transcriptional changes in Streptococcus gordonii in response to competence signaling peptide.</title>
        <authorList>
            <person name="Vickerman M.M."/>
            <person name="Iobst S."/>
            <person name="Jesionowski A.M."/>
            <person name="Gill S.R."/>
        </authorList>
    </citation>
    <scope>NUCLEOTIDE SEQUENCE [LARGE SCALE GENOMIC DNA]</scope>
    <source>
        <strain>Challis / ATCC 35105 / BCRC 15272 / CH1 / DL1 / V288</strain>
    </source>
</reference>
<sequence length="230" mass="26044">MVKLVFARHGESEWNKANLFTGWADVDLSEKGTQQAIDAGKLIKEAGIEFDQAYTSVLKRAIKTTNLALEAADQLWVPVEKSWRLNERHYGGLTGKNKAEAAEQFGDEQVHIWRRSYDVLPPAMPHDDEYSAHTDRRYASLDDSVIPDAENLKVTLERALPFWEDKIAPALKDGKNVFVGAHGNSIRALVKHIKHLSDDEIMGVEIPNFPPLVFEFDEKLNVVKEYYLGK</sequence>
<dbReference type="EC" id="5.4.2.11" evidence="1"/>
<dbReference type="EMBL" id="CP000725">
    <property type="protein sequence ID" value="ABV09871.1"/>
    <property type="molecule type" value="Genomic_DNA"/>
</dbReference>
<dbReference type="RefSeq" id="WP_012000174.1">
    <property type="nucleotide sequence ID" value="NC_009785.1"/>
</dbReference>
<dbReference type="SMR" id="A8AW46"/>
<dbReference type="STRING" id="467705.SGO_0704"/>
<dbReference type="KEGG" id="sgo:SGO_0704"/>
<dbReference type="eggNOG" id="COG0588">
    <property type="taxonomic scope" value="Bacteria"/>
</dbReference>
<dbReference type="HOGENOM" id="CLU_033323_1_5_9"/>
<dbReference type="UniPathway" id="UPA00109">
    <property type="reaction ID" value="UER00186"/>
</dbReference>
<dbReference type="Proteomes" id="UP000001131">
    <property type="component" value="Chromosome"/>
</dbReference>
<dbReference type="GO" id="GO:0004619">
    <property type="term" value="F:phosphoglycerate mutase activity"/>
    <property type="evidence" value="ECO:0007669"/>
    <property type="project" value="UniProtKB-EC"/>
</dbReference>
<dbReference type="GO" id="GO:0006094">
    <property type="term" value="P:gluconeogenesis"/>
    <property type="evidence" value="ECO:0007669"/>
    <property type="project" value="UniProtKB-UniRule"/>
</dbReference>
<dbReference type="GO" id="GO:0006096">
    <property type="term" value="P:glycolytic process"/>
    <property type="evidence" value="ECO:0007669"/>
    <property type="project" value="UniProtKB-UniRule"/>
</dbReference>
<dbReference type="CDD" id="cd07067">
    <property type="entry name" value="HP_PGM_like"/>
    <property type="match status" value="1"/>
</dbReference>
<dbReference type="FunFam" id="3.40.50.1240:FF:000003">
    <property type="entry name" value="2,3-bisphosphoglycerate-dependent phosphoglycerate mutase"/>
    <property type="match status" value="1"/>
</dbReference>
<dbReference type="Gene3D" id="3.40.50.1240">
    <property type="entry name" value="Phosphoglycerate mutase-like"/>
    <property type="match status" value="1"/>
</dbReference>
<dbReference type="HAMAP" id="MF_01039">
    <property type="entry name" value="PGAM_GpmA"/>
    <property type="match status" value="1"/>
</dbReference>
<dbReference type="InterPro" id="IPR013078">
    <property type="entry name" value="His_Pase_superF_clade-1"/>
</dbReference>
<dbReference type="InterPro" id="IPR029033">
    <property type="entry name" value="His_PPase_superfam"/>
</dbReference>
<dbReference type="InterPro" id="IPR005952">
    <property type="entry name" value="Phosphogly_mut1"/>
</dbReference>
<dbReference type="NCBIfam" id="TIGR01258">
    <property type="entry name" value="pgm_1"/>
    <property type="match status" value="1"/>
</dbReference>
<dbReference type="NCBIfam" id="NF010713">
    <property type="entry name" value="PRK14115.1"/>
    <property type="match status" value="1"/>
</dbReference>
<dbReference type="NCBIfam" id="NF010715">
    <property type="entry name" value="PRK14117.1"/>
    <property type="match status" value="1"/>
</dbReference>
<dbReference type="PANTHER" id="PTHR11931">
    <property type="entry name" value="PHOSPHOGLYCERATE MUTASE"/>
    <property type="match status" value="1"/>
</dbReference>
<dbReference type="Pfam" id="PF00300">
    <property type="entry name" value="His_Phos_1"/>
    <property type="match status" value="2"/>
</dbReference>
<dbReference type="PIRSF" id="PIRSF000709">
    <property type="entry name" value="6PFK_2-Ptase"/>
    <property type="match status" value="1"/>
</dbReference>
<dbReference type="SMART" id="SM00855">
    <property type="entry name" value="PGAM"/>
    <property type="match status" value="1"/>
</dbReference>
<dbReference type="SUPFAM" id="SSF53254">
    <property type="entry name" value="Phosphoglycerate mutase-like"/>
    <property type="match status" value="1"/>
</dbReference>
<comment type="function">
    <text evidence="1">Catalyzes the interconversion of 2-phosphoglycerate and 3-phosphoglycerate.</text>
</comment>
<comment type="catalytic activity">
    <reaction evidence="1">
        <text>(2R)-2-phosphoglycerate = (2R)-3-phosphoglycerate</text>
        <dbReference type="Rhea" id="RHEA:15901"/>
        <dbReference type="ChEBI" id="CHEBI:58272"/>
        <dbReference type="ChEBI" id="CHEBI:58289"/>
        <dbReference type="EC" id="5.4.2.11"/>
    </reaction>
</comment>
<comment type="pathway">
    <text evidence="1">Carbohydrate degradation; glycolysis; pyruvate from D-glyceraldehyde 3-phosphate: step 3/5.</text>
</comment>
<comment type="similarity">
    <text evidence="1">Belongs to the phosphoglycerate mutase family. BPG-dependent PGAM subfamily.</text>
</comment>
<feature type="chain" id="PRO_1000084334" description="2,3-bisphosphoglycerate-dependent phosphoglycerate mutase">
    <location>
        <begin position="1"/>
        <end position="230"/>
    </location>
</feature>
<feature type="active site" description="Tele-phosphohistidine intermediate" evidence="1">
    <location>
        <position position="9"/>
    </location>
</feature>
<feature type="active site" description="Proton donor/acceptor" evidence="1">
    <location>
        <position position="87"/>
    </location>
</feature>
<feature type="binding site" evidence="1">
    <location>
        <begin position="8"/>
        <end position="15"/>
    </location>
    <ligand>
        <name>substrate</name>
    </ligand>
</feature>
<feature type="binding site" evidence="1">
    <location>
        <begin position="21"/>
        <end position="22"/>
    </location>
    <ligand>
        <name>substrate</name>
    </ligand>
</feature>
<feature type="binding site" evidence="1">
    <location>
        <position position="60"/>
    </location>
    <ligand>
        <name>substrate</name>
    </ligand>
</feature>
<feature type="binding site" evidence="1">
    <location>
        <begin position="87"/>
        <end position="90"/>
    </location>
    <ligand>
        <name>substrate</name>
    </ligand>
</feature>
<feature type="binding site" evidence="1">
    <location>
        <position position="98"/>
    </location>
    <ligand>
        <name>substrate</name>
    </ligand>
</feature>
<feature type="binding site" evidence="1">
    <location>
        <begin position="114"/>
        <end position="115"/>
    </location>
    <ligand>
        <name>substrate</name>
    </ligand>
</feature>
<feature type="binding site" evidence="1">
    <location>
        <begin position="183"/>
        <end position="184"/>
    </location>
    <ligand>
        <name>substrate</name>
    </ligand>
</feature>
<feature type="site" description="Transition state stabilizer" evidence="1">
    <location>
        <position position="182"/>
    </location>
</feature>
<keyword id="KW-0312">Gluconeogenesis</keyword>
<keyword id="KW-0324">Glycolysis</keyword>
<keyword id="KW-0413">Isomerase</keyword>
<keyword id="KW-1185">Reference proteome</keyword>
<organism>
    <name type="scientific">Streptococcus gordonii (strain Challis / ATCC 35105 / BCRC 15272 / CH1 / DL1 / V288)</name>
    <dbReference type="NCBI Taxonomy" id="467705"/>
    <lineage>
        <taxon>Bacteria</taxon>
        <taxon>Bacillati</taxon>
        <taxon>Bacillota</taxon>
        <taxon>Bacilli</taxon>
        <taxon>Lactobacillales</taxon>
        <taxon>Streptococcaceae</taxon>
        <taxon>Streptococcus</taxon>
    </lineage>
</organism>
<proteinExistence type="inferred from homology"/>
<protein>
    <recommendedName>
        <fullName evidence="1">2,3-bisphosphoglycerate-dependent phosphoglycerate mutase</fullName>
        <shortName evidence="1">BPG-dependent PGAM</shortName>
        <shortName evidence="1">PGAM</shortName>
        <shortName evidence="1">Phosphoglyceromutase</shortName>
        <shortName evidence="1">dPGM</shortName>
        <ecNumber evidence="1">5.4.2.11</ecNumber>
    </recommendedName>
</protein>